<organism>
    <name type="scientific">Dictyostelium discoideum</name>
    <name type="common">Social amoeba</name>
    <dbReference type="NCBI Taxonomy" id="44689"/>
    <lineage>
        <taxon>Eukaryota</taxon>
        <taxon>Amoebozoa</taxon>
        <taxon>Evosea</taxon>
        <taxon>Eumycetozoa</taxon>
        <taxon>Dictyostelia</taxon>
        <taxon>Dictyosteliales</taxon>
        <taxon>Dictyosteliaceae</taxon>
        <taxon>Dictyostelium</taxon>
    </lineage>
</organism>
<evidence type="ECO:0000250" key="1"/>
<evidence type="ECO:0000305" key="2"/>
<feature type="chain" id="PRO_0000328219" description="Conserved oligomeric Golgi complex subunit 6">
    <location>
        <begin position="1"/>
        <end position="673"/>
    </location>
</feature>
<gene>
    <name type="primary">cog6</name>
    <name type="ORF">DDB_G0292784</name>
</gene>
<protein>
    <recommendedName>
        <fullName>Conserved oligomeric Golgi complex subunit 6</fullName>
        <shortName>COG complex subunit 6</shortName>
    </recommendedName>
    <alternativeName>
        <fullName>Component of oligomeric Golgi complex 6</fullName>
    </alternativeName>
</protein>
<proteinExistence type="inferred from homology"/>
<sequence length="673" mass="77100">MNSTLSRKIQKVLDIKLDSEDLSNALEELSTFYTSNSIGARRNLRNEIEKRYLDINIQFLDQFDQLNKNINELVLDFEGIKNSCVDICDHLNSTNRVSSELLKNAHELSCGLKEIKEKENTLQQFFKKFKLTPQEEQSLVKKEIDSSFYQTLDRLSEIQNECKKNLLSNQYQKPTYEILEIITKHQDNAYRRLYQWTKEEIKQLLIIEIPILDSFNNIDQQQQQQQQKVMMLPIALSALQNKPLLFKHCLDEISECRTKTISNGFITALSFGGPNGIPRPIEINAHDPQRYLGDMLAWIHQCLASEFELISTILSKVTIKLNENNNNNVDDNIENNNNNNNNNEELNFIEPIIKVLNNSFECINRPLSIRIDQILQSKPGVIITYKMISLLDFYSRMANLITKGSGVCRVSTIFGSIKSNCLSVFFTQIKDNFDRLERSPTVPSPQDLLPTNDIKDSINKLSELISTFNSSLIPLDEREKEYTPVFSSFIQKIINLTTFSATSSKLPLISMAVFMINCLSSIKSVLENYTSFTASNLELLTCQIEAHMDTLVEEQTSELLQQMGIGPKLSILQYSDNKSPLSQIIAMDRLSIVQSIRQFDNCLEQSFGTLLMPNCEKLSDTTLRSLSKKSVSNLISVAYSSLYSAIHDPFNQYDEPNSIFQYKPDQIKTMLDF</sequence>
<accession>Q54CT0</accession>
<name>COG6_DICDI</name>
<reference key="1">
    <citation type="journal article" date="2005" name="Nature">
        <title>The genome of the social amoeba Dictyostelium discoideum.</title>
        <authorList>
            <person name="Eichinger L."/>
            <person name="Pachebat J.A."/>
            <person name="Gloeckner G."/>
            <person name="Rajandream M.A."/>
            <person name="Sucgang R."/>
            <person name="Berriman M."/>
            <person name="Song J."/>
            <person name="Olsen R."/>
            <person name="Szafranski K."/>
            <person name="Xu Q."/>
            <person name="Tunggal B."/>
            <person name="Kummerfeld S."/>
            <person name="Madera M."/>
            <person name="Konfortov B.A."/>
            <person name="Rivero F."/>
            <person name="Bankier A.T."/>
            <person name="Lehmann R."/>
            <person name="Hamlin N."/>
            <person name="Davies R."/>
            <person name="Gaudet P."/>
            <person name="Fey P."/>
            <person name="Pilcher K."/>
            <person name="Chen G."/>
            <person name="Saunders D."/>
            <person name="Sodergren E.J."/>
            <person name="Davis P."/>
            <person name="Kerhornou A."/>
            <person name="Nie X."/>
            <person name="Hall N."/>
            <person name="Anjard C."/>
            <person name="Hemphill L."/>
            <person name="Bason N."/>
            <person name="Farbrother P."/>
            <person name="Desany B."/>
            <person name="Just E."/>
            <person name="Morio T."/>
            <person name="Rost R."/>
            <person name="Churcher C.M."/>
            <person name="Cooper J."/>
            <person name="Haydock S."/>
            <person name="van Driessche N."/>
            <person name="Cronin A."/>
            <person name="Goodhead I."/>
            <person name="Muzny D.M."/>
            <person name="Mourier T."/>
            <person name="Pain A."/>
            <person name="Lu M."/>
            <person name="Harper D."/>
            <person name="Lindsay R."/>
            <person name="Hauser H."/>
            <person name="James K.D."/>
            <person name="Quiles M."/>
            <person name="Madan Babu M."/>
            <person name="Saito T."/>
            <person name="Buchrieser C."/>
            <person name="Wardroper A."/>
            <person name="Felder M."/>
            <person name="Thangavelu M."/>
            <person name="Johnson D."/>
            <person name="Knights A."/>
            <person name="Loulseged H."/>
            <person name="Mungall K.L."/>
            <person name="Oliver K."/>
            <person name="Price C."/>
            <person name="Quail M.A."/>
            <person name="Urushihara H."/>
            <person name="Hernandez J."/>
            <person name="Rabbinowitsch E."/>
            <person name="Steffen D."/>
            <person name="Sanders M."/>
            <person name="Ma J."/>
            <person name="Kohara Y."/>
            <person name="Sharp S."/>
            <person name="Simmonds M.N."/>
            <person name="Spiegler S."/>
            <person name="Tivey A."/>
            <person name="Sugano S."/>
            <person name="White B."/>
            <person name="Walker D."/>
            <person name="Woodward J.R."/>
            <person name="Winckler T."/>
            <person name="Tanaka Y."/>
            <person name="Shaulsky G."/>
            <person name="Schleicher M."/>
            <person name="Weinstock G.M."/>
            <person name="Rosenthal A."/>
            <person name="Cox E.C."/>
            <person name="Chisholm R.L."/>
            <person name="Gibbs R.A."/>
            <person name="Loomis W.F."/>
            <person name="Platzer M."/>
            <person name="Kay R.R."/>
            <person name="Williams J.G."/>
            <person name="Dear P.H."/>
            <person name="Noegel A.A."/>
            <person name="Barrell B.G."/>
            <person name="Kuspa A."/>
        </authorList>
    </citation>
    <scope>NUCLEOTIDE SEQUENCE [LARGE SCALE GENOMIC DNA]</scope>
    <source>
        <strain>AX4</strain>
    </source>
</reference>
<comment type="function">
    <text evidence="1">Required for normal Golgi function.</text>
</comment>
<comment type="subunit">
    <text evidence="1">Component of the conserved oligomeric Golgi complex which is composed of eight different subunits and is required for normal Golgi morphology and localization.</text>
</comment>
<comment type="subcellular location">
    <subcellularLocation>
        <location evidence="1">Golgi apparatus membrane</location>
        <topology evidence="1">Peripheral membrane protein</topology>
    </subcellularLocation>
</comment>
<comment type="similarity">
    <text evidence="2">Belongs to the COG6 family.</text>
</comment>
<dbReference type="EMBL" id="AAFI02000196">
    <property type="protein sequence ID" value="EAL61066.1"/>
    <property type="molecule type" value="Genomic_DNA"/>
</dbReference>
<dbReference type="RefSeq" id="XP_629461.1">
    <property type="nucleotide sequence ID" value="XM_629459.1"/>
</dbReference>
<dbReference type="FunCoup" id="Q54CT0">
    <property type="interactions" value="340"/>
</dbReference>
<dbReference type="STRING" id="44689.Q54CT0"/>
<dbReference type="PaxDb" id="44689-DDB0237952"/>
<dbReference type="EnsemblProtists" id="EAL61066">
    <property type="protein sequence ID" value="EAL61066"/>
    <property type="gene ID" value="DDB_G0292784"/>
</dbReference>
<dbReference type="GeneID" id="8628851"/>
<dbReference type="KEGG" id="ddi:DDB_G0292784"/>
<dbReference type="dictyBase" id="DDB_G0292784">
    <property type="gene designation" value="cog6"/>
</dbReference>
<dbReference type="VEuPathDB" id="AmoebaDB:DDB_G0292784"/>
<dbReference type="eggNOG" id="KOG3758">
    <property type="taxonomic scope" value="Eukaryota"/>
</dbReference>
<dbReference type="HOGENOM" id="CLU_011361_3_0_1"/>
<dbReference type="InParanoid" id="Q54CT0"/>
<dbReference type="OMA" id="HSCLDFF"/>
<dbReference type="PhylomeDB" id="Q54CT0"/>
<dbReference type="Reactome" id="R-DDI-6807878">
    <property type="pathway name" value="COPI-mediated anterograde transport"/>
</dbReference>
<dbReference type="Reactome" id="R-DDI-6811438">
    <property type="pathway name" value="Intra-Golgi traffic"/>
</dbReference>
<dbReference type="PRO" id="PR:Q54CT0"/>
<dbReference type="Proteomes" id="UP000002195">
    <property type="component" value="Chromosome 6"/>
</dbReference>
<dbReference type="GO" id="GO:0000139">
    <property type="term" value="C:Golgi membrane"/>
    <property type="evidence" value="ECO:0007669"/>
    <property type="project" value="UniProtKB-SubCell"/>
</dbReference>
<dbReference type="GO" id="GO:0017119">
    <property type="term" value="C:Golgi transport complex"/>
    <property type="evidence" value="ECO:0000318"/>
    <property type="project" value="GO_Central"/>
</dbReference>
<dbReference type="GO" id="GO:0006891">
    <property type="term" value="P:intra-Golgi vesicle-mediated transport"/>
    <property type="evidence" value="ECO:0000318"/>
    <property type="project" value="GO_Central"/>
</dbReference>
<dbReference type="GO" id="GO:0015031">
    <property type="term" value="P:protein transport"/>
    <property type="evidence" value="ECO:0007669"/>
    <property type="project" value="UniProtKB-KW"/>
</dbReference>
<dbReference type="InterPro" id="IPR010490">
    <property type="entry name" value="COG6"/>
</dbReference>
<dbReference type="InterPro" id="IPR048369">
    <property type="entry name" value="COG6_C"/>
</dbReference>
<dbReference type="InterPro" id="IPR048368">
    <property type="entry name" value="COG6_N"/>
</dbReference>
<dbReference type="PANTHER" id="PTHR21506">
    <property type="entry name" value="COMPONENT OF OLIGOMERIC GOLGI COMPLEX 6"/>
    <property type="match status" value="1"/>
</dbReference>
<dbReference type="PANTHER" id="PTHR21506:SF0">
    <property type="entry name" value="CONSERVED OLIGOMERIC GOLGI COMPLEX SUBUNIT 6"/>
    <property type="match status" value="1"/>
</dbReference>
<dbReference type="Pfam" id="PF20653">
    <property type="entry name" value="COG6_C"/>
    <property type="match status" value="1"/>
</dbReference>
<dbReference type="Pfam" id="PF06419">
    <property type="entry name" value="COG6_N"/>
    <property type="match status" value="1"/>
</dbReference>
<dbReference type="SMART" id="SM01087">
    <property type="entry name" value="COG6"/>
    <property type="match status" value="1"/>
</dbReference>
<keyword id="KW-0333">Golgi apparatus</keyword>
<keyword id="KW-0472">Membrane</keyword>
<keyword id="KW-0653">Protein transport</keyword>
<keyword id="KW-1185">Reference proteome</keyword>
<keyword id="KW-0813">Transport</keyword>